<gene>
    <name evidence="1" type="primary">nfo</name>
    <name type="ordered locus">SA1386</name>
</gene>
<evidence type="ECO:0000255" key="1">
    <source>
        <dbReference type="HAMAP-Rule" id="MF_00152"/>
    </source>
</evidence>
<organism>
    <name type="scientific">Staphylococcus aureus (strain N315)</name>
    <dbReference type="NCBI Taxonomy" id="158879"/>
    <lineage>
        <taxon>Bacteria</taxon>
        <taxon>Bacillati</taxon>
        <taxon>Bacillota</taxon>
        <taxon>Bacilli</taxon>
        <taxon>Bacillales</taxon>
        <taxon>Staphylococcaceae</taxon>
        <taxon>Staphylococcus</taxon>
    </lineage>
</organism>
<comment type="function">
    <text evidence="1">Endonuclease IV plays a role in DNA repair. It cleaves phosphodiester bonds at apurinic or apyrimidinic (AP) sites, generating a 3'-hydroxyl group and a 5'-terminal sugar phosphate.</text>
</comment>
<comment type="catalytic activity">
    <reaction evidence="1">
        <text>Endonucleolytic cleavage to 5'-phosphooligonucleotide end-products.</text>
        <dbReference type="EC" id="3.1.21.2"/>
    </reaction>
</comment>
<comment type="cofactor">
    <cofactor evidence="1">
        <name>Zn(2+)</name>
        <dbReference type="ChEBI" id="CHEBI:29105"/>
    </cofactor>
    <text evidence="1">Binds 3 Zn(2+) ions.</text>
</comment>
<comment type="similarity">
    <text evidence="1">Belongs to the AP endonuclease 2 family.</text>
</comment>
<protein>
    <recommendedName>
        <fullName evidence="1">Probable endonuclease 4</fullName>
        <ecNumber evidence="1">3.1.21.2</ecNumber>
    </recommendedName>
    <alternativeName>
        <fullName evidence="1">Endodeoxyribonuclease IV</fullName>
    </alternativeName>
    <alternativeName>
        <fullName evidence="1">Endonuclease IV</fullName>
    </alternativeName>
</protein>
<reference key="1">
    <citation type="journal article" date="2001" name="Lancet">
        <title>Whole genome sequencing of meticillin-resistant Staphylococcus aureus.</title>
        <authorList>
            <person name="Kuroda M."/>
            <person name="Ohta T."/>
            <person name="Uchiyama I."/>
            <person name="Baba T."/>
            <person name="Yuzawa H."/>
            <person name="Kobayashi I."/>
            <person name="Cui L."/>
            <person name="Oguchi A."/>
            <person name="Aoki K."/>
            <person name="Nagai Y."/>
            <person name="Lian J.-Q."/>
            <person name="Ito T."/>
            <person name="Kanamori M."/>
            <person name="Matsumaru H."/>
            <person name="Maruyama A."/>
            <person name="Murakami H."/>
            <person name="Hosoyama A."/>
            <person name="Mizutani-Ui Y."/>
            <person name="Takahashi N.K."/>
            <person name="Sawano T."/>
            <person name="Inoue R."/>
            <person name="Kaito C."/>
            <person name="Sekimizu K."/>
            <person name="Hirakawa H."/>
            <person name="Kuhara S."/>
            <person name="Goto S."/>
            <person name="Yabuzaki J."/>
            <person name="Kanehisa M."/>
            <person name="Yamashita A."/>
            <person name="Oshima K."/>
            <person name="Furuya K."/>
            <person name="Yoshino C."/>
            <person name="Shiba T."/>
            <person name="Hattori M."/>
            <person name="Ogasawara N."/>
            <person name="Hayashi H."/>
            <person name="Hiramatsu K."/>
        </authorList>
    </citation>
    <scope>NUCLEOTIDE SEQUENCE [LARGE SCALE GENOMIC DNA]</scope>
    <source>
        <strain>N315</strain>
    </source>
</reference>
<reference key="2">
    <citation type="submission" date="2007-10" db="UniProtKB">
        <title>Shotgun proteomic analysis of total and membrane protein extracts of S. aureus strain N315.</title>
        <authorList>
            <person name="Vaezzadeh A.R."/>
            <person name="Deshusses J."/>
            <person name="Lescuyer P."/>
            <person name="Hochstrasser D.F."/>
        </authorList>
    </citation>
    <scope>IDENTIFICATION BY MASS SPECTROMETRY [LARGE SCALE ANALYSIS]</scope>
    <source>
        <strain>N315</strain>
    </source>
</reference>
<proteinExistence type="evidence at protein level"/>
<dbReference type="EC" id="3.1.21.2" evidence="1"/>
<dbReference type="EMBL" id="BA000018">
    <property type="protein sequence ID" value="BAB42649.1"/>
    <property type="molecule type" value="Genomic_DNA"/>
</dbReference>
<dbReference type="PIR" id="D89936">
    <property type="entry name" value="D89936"/>
</dbReference>
<dbReference type="RefSeq" id="WP_000924220.1">
    <property type="nucleotide sequence ID" value="NC_002745.2"/>
</dbReference>
<dbReference type="SMR" id="P63538"/>
<dbReference type="EnsemblBacteria" id="BAB42649">
    <property type="protein sequence ID" value="BAB42649"/>
    <property type="gene ID" value="BAB42649"/>
</dbReference>
<dbReference type="KEGG" id="sau:SA1386"/>
<dbReference type="HOGENOM" id="CLU_025885_4_1_9"/>
<dbReference type="GO" id="GO:0008833">
    <property type="term" value="F:deoxyribonuclease IV (phage-T4-induced) activity"/>
    <property type="evidence" value="ECO:0007669"/>
    <property type="project" value="UniProtKB-UniRule"/>
</dbReference>
<dbReference type="GO" id="GO:0003677">
    <property type="term" value="F:DNA binding"/>
    <property type="evidence" value="ECO:0007669"/>
    <property type="project" value="InterPro"/>
</dbReference>
<dbReference type="GO" id="GO:0003906">
    <property type="term" value="F:DNA-(apurinic or apyrimidinic site) endonuclease activity"/>
    <property type="evidence" value="ECO:0007669"/>
    <property type="project" value="TreeGrafter"/>
</dbReference>
<dbReference type="GO" id="GO:0008081">
    <property type="term" value="F:phosphoric diester hydrolase activity"/>
    <property type="evidence" value="ECO:0007669"/>
    <property type="project" value="TreeGrafter"/>
</dbReference>
<dbReference type="GO" id="GO:0008270">
    <property type="term" value="F:zinc ion binding"/>
    <property type="evidence" value="ECO:0007669"/>
    <property type="project" value="UniProtKB-UniRule"/>
</dbReference>
<dbReference type="GO" id="GO:0006284">
    <property type="term" value="P:base-excision repair"/>
    <property type="evidence" value="ECO:0007669"/>
    <property type="project" value="TreeGrafter"/>
</dbReference>
<dbReference type="CDD" id="cd00019">
    <property type="entry name" value="AP2Ec"/>
    <property type="match status" value="1"/>
</dbReference>
<dbReference type="FunFam" id="3.20.20.150:FF:000001">
    <property type="entry name" value="Probable endonuclease 4"/>
    <property type="match status" value="1"/>
</dbReference>
<dbReference type="Gene3D" id="3.20.20.150">
    <property type="entry name" value="Divalent-metal-dependent TIM barrel enzymes"/>
    <property type="match status" value="1"/>
</dbReference>
<dbReference type="HAMAP" id="MF_00152">
    <property type="entry name" value="Nfo"/>
    <property type="match status" value="1"/>
</dbReference>
<dbReference type="InterPro" id="IPR001719">
    <property type="entry name" value="AP_endonuc_2"/>
</dbReference>
<dbReference type="InterPro" id="IPR018246">
    <property type="entry name" value="AP_endonuc_F2_Zn_BS"/>
</dbReference>
<dbReference type="InterPro" id="IPR036237">
    <property type="entry name" value="Xyl_isomerase-like_sf"/>
</dbReference>
<dbReference type="InterPro" id="IPR013022">
    <property type="entry name" value="Xyl_isomerase-like_TIM-brl"/>
</dbReference>
<dbReference type="NCBIfam" id="TIGR00587">
    <property type="entry name" value="nfo"/>
    <property type="match status" value="1"/>
</dbReference>
<dbReference type="NCBIfam" id="NF002196">
    <property type="entry name" value="PRK01060.1-1"/>
    <property type="match status" value="1"/>
</dbReference>
<dbReference type="PANTHER" id="PTHR21445:SF0">
    <property type="entry name" value="APURINIC-APYRIMIDINIC ENDONUCLEASE"/>
    <property type="match status" value="1"/>
</dbReference>
<dbReference type="PANTHER" id="PTHR21445">
    <property type="entry name" value="ENDONUCLEASE IV ENDODEOXYRIBONUCLEASE IV"/>
    <property type="match status" value="1"/>
</dbReference>
<dbReference type="Pfam" id="PF01261">
    <property type="entry name" value="AP_endonuc_2"/>
    <property type="match status" value="1"/>
</dbReference>
<dbReference type="SMART" id="SM00518">
    <property type="entry name" value="AP2Ec"/>
    <property type="match status" value="1"/>
</dbReference>
<dbReference type="SUPFAM" id="SSF51658">
    <property type="entry name" value="Xylose isomerase-like"/>
    <property type="match status" value="1"/>
</dbReference>
<dbReference type="PROSITE" id="PS00729">
    <property type="entry name" value="AP_NUCLEASE_F2_1"/>
    <property type="match status" value="1"/>
</dbReference>
<dbReference type="PROSITE" id="PS00730">
    <property type="entry name" value="AP_NUCLEASE_F2_2"/>
    <property type="match status" value="1"/>
</dbReference>
<dbReference type="PROSITE" id="PS00731">
    <property type="entry name" value="AP_NUCLEASE_F2_3"/>
    <property type="match status" value="1"/>
</dbReference>
<dbReference type="PROSITE" id="PS51432">
    <property type="entry name" value="AP_NUCLEASE_F2_4"/>
    <property type="match status" value="1"/>
</dbReference>
<feature type="chain" id="PRO_0000190871" description="Probable endonuclease 4">
    <location>
        <begin position="1"/>
        <end position="296"/>
    </location>
</feature>
<feature type="binding site" evidence="1">
    <location>
        <position position="68"/>
    </location>
    <ligand>
        <name>Zn(2+)</name>
        <dbReference type="ChEBI" id="CHEBI:29105"/>
        <label>1</label>
    </ligand>
</feature>
<feature type="binding site" evidence="1">
    <location>
        <position position="109"/>
    </location>
    <ligand>
        <name>Zn(2+)</name>
        <dbReference type="ChEBI" id="CHEBI:29105"/>
        <label>1</label>
    </ligand>
</feature>
<feature type="binding site" evidence="1">
    <location>
        <position position="144"/>
    </location>
    <ligand>
        <name>Zn(2+)</name>
        <dbReference type="ChEBI" id="CHEBI:29105"/>
        <label>1</label>
    </ligand>
</feature>
<feature type="binding site" evidence="1">
    <location>
        <position position="144"/>
    </location>
    <ligand>
        <name>Zn(2+)</name>
        <dbReference type="ChEBI" id="CHEBI:29105"/>
        <label>2</label>
    </ligand>
</feature>
<feature type="binding site" evidence="1">
    <location>
        <position position="178"/>
    </location>
    <ligand>
        <name>Zn(2+)</name>
        <dbReference type="ChEBI" id="CHEBI:29105"/>
        <label>2</label>
    </ligand>
</feature>
<feature type="binding site" evidence="1">
    <location>
        <position position="181"/>
    </location>
    <ligand>
        <name>Zn(2+)</name>
        <dbReference type="ChEBI" id="CHEBI:29105"/>
        <label>3</label>
    </ligand>
</feature>
<feature type="binding site" evidence="1">
    <location>
        <position position="213"/>
    </location>
    <ligand>
        <name>Zn(2+)</name>
        <dbReference type="ChEBI" id="CHEBI:29105"/>
        <label>2</label>
    </ligand>
</feature>
<feature type="binding site" evidence="1">
    <location>
        <position position="226"/>
    </location>
    <ligand>
        <name>Zn(2+)</name>
        <dbReference type="ChEBI" id="CHEBI:29105"/>
        <label>3</label>
    </ligand>
</feature>
<feature type="binding site" evidence="1">
    <location>
        <position position="228"/>
    </location>
    <ligand>
        <name>Zn(2+)</name>
        <dbReference type="ChEBI" id="CHEBI:29105"/>
        <label>3</label>
    </ligand>
</feature>
<feature type="binding site" evidence="1">
    <location>
        <position position="258"/>
    </location>
    <ligand>
        <name>Zn(2+)</name>
        <dbReference type="ChEBI" id="CHEBI:29105"/>
        <label>2</label>
    </ligand>
</feature>
<sequence>MLLGSHVSMSGKKMLEGSAIEAYEYGETTFMIYTGAPQNTRRKSIEDLNITKGHEVMEKYGLSNIVVHAPYIINIANTTKPETFNLGVDFLQQEIERTQAIGAKDIVLHPGAHVGAGVDAGINKIIEGLNEVLTNDNNVRIALETMAGKGTEIGRSFEELARIIDGVHNNERLSVCFDTCHTHDAGYNVKEDFDGVLNEFDKIIGVDRIKVVHVNDSKNDRGAQKDRHENIGFGYIGFDALNYIVHHDSFKDIPKILETPYVGEDKKNKKPPYKLEIEMLKQQQFDPELKNKVMQQ</sequence>
<accession>P63538</accession>
<accession>Q99TT9</accession>
<keyword id="KW-0227">DNA damage</keyword>
<keyword id="KW-0234">DNA repair</keyword>
<keyword id="KW-0255">Endonuclease</keyword>
<keyword id="KW-0378">Hydrolase</keyword>
<keyword id="KW-0479">Metal-binding</keyword>
<keyword id="KW-0540">Nuclease</keyword>
<keyword id="KW-0862">Zinc</keyword>
<name>END4_STAAN</name>